<evidence type="ECO:0000255" key="1">
    <source>
        <dbReference type="HAMAP-Rule" id="MF_00029"/>
    </source>
</evidence>
<evidence type="ECO:0000256" key="2">
    <source>
        <dbReference type="SAM" id="MobiDB-lite"/>
    </source>
</evidence>
<evidence type="ECO:0000305" key="3"/>
<accession>Q4JAP5</accession>
<proteinExistence type="evidence at protein level"/>
<keyword id="KW-0002">3D-structure</keyword>
<keyword id="KW-1185">Reference proteome</keyword>
<keyword id="KW-0687">Ribonucleoprotein</keyword>
<keyword id="KW-0689">Ribosomal protein</keyword>
<protein>
    <recommendedName>
        <fullName evidence="1">Small ribosomal subunit protein eS8</fullName>
    </recommendedName>
    <alternativeName>
        <fullName evidence="3">30S ribosomal protein S8e</fullName>
    </alternativeName>
</protein>
<comment type="subunit">
    <text evidence="1">Part of the 30S ribosomal subunit.</text>
</comment>
<comment type="similarity">
    <text evidence="1">Belongs to the eukaryotic ribosomal protein eS8 family.</text>
</comment>
<feature type="chain" id="PRO_0000122279" description="Small ribosomal subunit protein eS8">
    <location>
        <begin position="1"/>
        <end position="128"/>
    </location>
</feature>
<feature type="region of interest" description="Disordered" evidence="2">
    <location>
        <begin position="1"/>
        <end position="41"/>
    </location>
</feature>
<name>RS8E_SULAC</name>
<gene>
    <name evidence="1" type="primary">rps8e</name>
    <name type="ordered locus">Saci_0758</name>
</gene>
<reference key="1">
    <citation type="journal article" date="2005" name="J. Bacteriol.">
        <title>The genome of Sulfolobus acidocaldarius, a model organism of the Crenarchaeota.</title>
        <authorList>
            <person name="Chen L."/>
            <person name="Bruegger K."/>
            <person name="Skovgaard M."/>
            <person name="Redder P."/>
            <person name="She Q."/>
            <person name="Torarinsson E."/>
            <person name="Greve B."/>
            <person name="Awayez M."/>
            <person name="Zibat A."/>
            <person name="Klenk H.-P."/>
            <person name="Garrett R.A."/>
        </authorList>
    </citation>
    <scope>NUCLEOTIDE SEQUENCE [LARGE SCALE GENOMIC DNA]</scope>
    <source>
        <strain>ATCC 33909 / DSM 639 / JCM 8929 / NBRC 15157 / NCIMB 11770</strain>
    </source>
</reference>
<organism>
    <name type="scientific">Sulfolobus acidocaldarius (strain ATCC 33909 / DSM 639 / JCM 8929 / NBRC 15157 / NCIMB 11770)</name>
    <dbReference type="NCBI Taxonomy" id="330779"/>
    <lineage>
        <taxon>Archaea</taxon>
        <taxon>Thermoproteota</taxon>
        <taxon>Thermoprotei</taxon>
        <taxon>Sulfolobales</taxon>
        <taxon>Sulfolobaceae</taxon>
        <taxon>Sulfolobus</taxon>
    </lineage>
</organism>
<dbReference type="EMBL" id="CP000077">
    <property type="protein sequence ID" value="AAY80134.1"/>
    <property type="molecule type" value="Genomic_DNA"/>
</dbReference>
<dbReference type="RefSeq" id="WP_011277636.1">
    <property type="nucleotide sequence ID" value="NC_007181.1"/>
</dbReference>
<dbReference type="PDB" id="8HKX">
    <property type="method" value="EM"/>
    <property type="resolution" value="3.14 A"/>
    <property type="chains" value="AS8E=2-127"/>
</dbReference>
<dbReference type="PDB" id="8HKY">
    <property type="method" value="EM"/>
    <property type="resolution" value="4.45 A"/>
    <property type="chains" value="AS8E=2-127"/>
</dbReference>
<dbReference type="PDB" id="8HKZ">
    <property type="method" value="EM"/>
    <property type="resolution" value="4.78 A"/>
    <property type="chains" value="AS8E=2-127"/>
</dbReference>
<dbReference type="PDB" id="8HL1">
    <property type="method" value="EM"/>
    <property type="resolution" value="3.93 A"/>
    <property type="chains" value="AS8E=2-127"/>
</dbReference>
<dbReference type="PDB" id="8HL2">
    <property type="method" value="EM"/>
    <property type="resolution" value="4.10 A"/>
    <property type="chains" value="AS8E=2-127"/>
</dbReference>
<dbReference type="PDB" id="8HL3">
    <property type="method" value="EM"/>
    <property type="resolution" value="4.80 A"/>
    <property type="chains" value="AS8E=2-127"/>
</dbReference>
<dbReference type="PDB" id="8HL4">
    <property type="method" value="EM"/>
    <property type="resolution" value="4.62 A"/>
    <property type="chains" value="AS8E=2-127"/>
</dbReference>
<dbReference type="PDB" id="8HL5">
    <property type="method" value="EM"/>
    <property type="resolution" value="5.72 A"/>
    <property type="chains" value="AS8E=2-127"/>
</dbReference>
<dbReference type="PDB" id="8WKP">
    <property type="method" value="EM"/>
    <property type="resolution" value="4.62 A"/>
    <property type="chains" value="AS8E=2-127"/>
</dbReference>
<dbReference type="PDB" id="8WQ2">
    <property type="method" value="EM"/>
    <property type="resolution" value="4.10 A"/>
    <property type="chains" value="AS8E=2-127"/>
</dbReference>
<dbReference type="PDB" id="8WQ4">
    <property type="method" value="EM"/>
    <property type="resolution" value="4.53 A"/>
    <property type="chains" value="AS8E=2-127"/>
</dbReference>
<dbReference type="PDBsum" id="8HKX"/>
<dbReference type="PDBsum" id="8HKY"/>
<dbReference type="PDBsum" id="8HKZ"/>
<dbReference type="PDBsum" id="8HL1"/>
<dbReference type="PDBsum" id="8HL2"/>
<dbReference type="PDBsum" id="8HL3"/>
<dbReference type="PDBsum" id="8HL4"/>
<dbReference type="PDBsum" id="8HL5"/>
<dbReference type="PDBsum" id="8WKP"/>
<dbReference type="PDBsum" id="8WQ2"/>
<dbReference type="PDBsum" id="8WQ4"/>
<dbReference type="EMDB" id="EMD-34862"/>
<dbReference type="EMDB" id="EMD-34863"/>
<dbReference type="EMDB" id="EMD-34864"/>
<dbReference type="EMDB" id="EMD-34866"/>
<dbReference type="EMDB" id="EMD-34867"/>
<dbReference type="EMDB" id="EMD-34868"/>
<dbReference type="EMDB" id="EMD-34869"/>
<dbReference type="EMDB" id="EMD-34870"/>
<dbReference type="EMDB" id="EMD-37604"/>
<dbReference type="EMDB" id="EMD-37733"/>
<dbReference type="EMDB" id="EMD-37734"/>
<dbReference type="SMR" id="Q4JAP5"/>
<dbReference type="STRING" id="330779.Saci_0758"/>
<dbReference type="GeneID" id="14551276"/>
<dbReference type="KEGG" id="sai:Saci_0758"/>
<dbReference type="PATRIC" id="fig|330779.12.peg.727"/>
<dbReference type="eggNOG" id="arCOG04154">
    <property type="taxonomic scope" value="Archaea"/>
</dbReference>
<dbReference type="HOGENOM" id="CLU_080597_2_1_2"/>
<dbReference type="Proteomes" id="UP000001018">
    <property type="component" value="Chromosome"/>
</dbReference>
<dbReference type="GO" id="GO:1990904">
    <property type="term" value="C:ribonucleoprotein complex"/>
    <property type="evidence" value="ECO:0007669"/>
    <property type="project" value="UniProtKB-KW"/>
</dbReference>
<dbReference type="GO" id="GO:0005840">
    <property type="term" value="C:ribosome"/>
    <property type="evidence" value="ECO:0007669"/>
    <property type="project" value="UniProtKB-KW"/>
</dbReference>
<dbReference type="GO" id="GO:0003735">
    <property type="term" value="F:structural constituent of ribosome"/>
    <property type="evidence" value="ECO:0007669"/>
    <property type="project" value="InterPro"/>
</dbReference>
<dbReference type="GO" id="GO:0006412">
    <property type="term" value="P:translation"/>
    <property type="evidence" value="ECO:0007669"/>
    <property type="project" value="UniProtKB-UniRule"/>
</dbReference>
<dbReference type="CDD" id="cd11382">
    <property type="entry name" value="Ribosomal_S8e"/>
    <property type="match status" value="1"/>
</dbReference>
<dbReference type="FunFam" id="2.40.10.310:FF:000002">
    <property type="entry name" value="30S ribosomal protein S8e"/>
    <property type="match status" value="1"/>
</dbReference>
<dbReference type="Gene3D" id="2.40.10.310">
    <property type="match status" value="1"/>
</dbReference>
<dbReference type="HAMAP" id="MF_00029">
    <property type="entry name" value="Ribosomal_eS8"/>
    <property type="match status" value="1"/>
</dbReference>
<dbReference type="InterPro" id="IPR001047">
    <property type="entry name" value="Ribosomal_eS8"/>
</dbReference>
<dbReference type="InterPro" id="IPR018283">
    <property type="entry name" value="Ribosomal_eS8_CS"/>
</dbReference>
<dbReference type="InterPro" id="IPR020919">
    <property type="entry name" value="Ribosomal_protein_eS8_arc"/>
</dbReference>
<dbReference type="InterPro" id="IPR022309">
    <property type="entry name" value="Ribosomal_Se8/biogenesis_NSA2"/>
</dbReference>
<dbReference type="NCBIfam" id="TIGR00307">
    <property type="entry name" value="eS8"/>
    <property type="match status" value="1"/>
</dbReference>
<dbReference type="PANTHER" id="PTHR10394">
    <property type="entry name" value="40S RIBOSOMAL PROTEIN S8"/>
    <property type="match status" value="1"/>
</dbReference>
<dbReference type="Pfam" id="PF01201">
    <property type="entry name" value="Ribosomal_S8e"/>
    <property type="match status" value="1"/>
</dbReference>
<dbReference type="PROSITE" id="PS01193">
    <property type="entry name" value="RIBOSOMAL_S8E"/>
    <property type="match status" value="1"/>
</dbReference>
<sequence length="128" mass="14345">MSYYQGNDSRKITGGQKGKNRDKRKYELGSPPTETKISDKDIKEKDRVAGGNFKLRLRYASYANVYDPQSKTAKKVKIISVLESPANREYARRGIIVKGTLIQTELGKAKVTSRPGQDGIINALLLRE</sequence>